<reference key="1">
    <citation type="journal article" date="2008" name="DNA Res.">
        <title>Determination of the genome sequence of Porphyromonas gingivalis strain ATCC 33277 and genomic comparison with strain W83 revealed extensive genome rearrangements in P. gingivalis.</title>
        <authorList>
            <person name="Naito M."/>
            <person name="Hirakawa H."/>
            <person name="Yamashita A."/>
            <person name="Ohara N."/>
            <person name="Shoji M."/>
            <person name="Yukitake H."/>
            <person name="Nakayama K."/>
            <person name="Toh H."/>
            <person name="Yoshimura F."/>
            <person name="Kuhara S."/>
            <person name="Hattori M."/>
            <person name="Hayashi T."/>
            <person name="Nakayama K."/>
        </authorList>
    </citation>
    <scope>NUCLEOTIDE SEQUENCE [LARGE SCALE GENOMIC DNA]</scope>
    <source>
        <strain>ATCC 33277 / DSM 20709 / CIP 103683 / JCM 12257 / NCTC 11834 / 2561</strain>
    </source>
</reference>
<name>MIAB_PORG3</name>
<proteinExistence type="inferred from homology"/>
<keyword id="KW-0004">4Fe-4S</keyword>
<keyword id="KW-0963">Cytoplasm</keyword>
<keyword id="KW-0408">Iron</keyword>
<keyword id="KW-0411">Iron-sulfur</keyword>
<keyword id="KW-0479">Metal-binding</keyword>
<keyword id="KW-0949">S-adenosyl-L-methionine</keyword>
<keyword id="KW-0808">Transferase</keyword>
<keyword id="KW-0819">tRNA processing</keyword>
<dbReference type="EC" id="2.8.4.3" evidence="1"/>
<dbReference type="EMBL" id="AP009380">
    <property type="protein sequence ID" value="BAG33861.1"/>
    <property type="molecule type" value="Genomic_DNA"/>
</dbReference>
<dbReference type="RefSeq" id="WP_012458201.1">
    <property type="nucleotide sequence ID" value="NC_010729.1"/>
</dbReference>
<dbReference type="SMR" id="B2RKG6"/>
<dbReference type="GeneID" id="29256532"/>
<dbReference type="KEGG" id="pgn:PGN_1342"/>
<dbReference type="eggNOG" id="COG0621">
    <property type="taxonomic scope" value="Bacteria"/>
</dbReference>
<dbReference type="HOGENOM" id="CLU_018697_2_0_10"/>
<dbReference type="OrthoDB" id="9805215at2"/>
<dbReference type="BioCyc" id="PGIN431947:G1G2V-1526-MONOMER"/>
<dbReference type="Proteomes" id="UP000008842">
    <property type="component" value="Chromosome"/>
</dbReference>
<dbReference type="GO" id="GO:0005829">
    <property type="term" value="C:cytosol"/>
    <property type="evidence" value="ECO:0007669"/>
    <property type="project" value="TreeGrafter"/>
</dbReference>
<dbReference type="GO" id="GO:0051539">
    <property type="term" value="F:4 iron, 4 sulfur cluster binding"/>
    <property type="evidence" value="ECO:0007669"/>
    <property type="project" value="UniProtKB-UniRule"/>
</dbReference>
<dbReference type="GO" id="GO:0046872">
    <property type="term" value="F:metal ion binding"/>
    <property type="evidence" value="ECO:0007669"/>
    <property type="project" value="UniProtKB-KW"/>
</dbReference>
<dbReference type="GO" id="GO:0035597">
    <property type="term" value="F:N6-isopentenyladenosine methylthiotransferase activity"/>
    <property type="evidence" value="ECO:0007669"/>
    <property type="project" value="TreeGrafter"/>
</dbReference>
<dbReference type="CDD" id="cd01335">
    <property type="entry name" value="Radical_SAM"/>
    <property type="match status" value="1"/>
</dbReference>
<dbReference type="FunFam" id="3.40.50.12160:FF:000003">
    <property type="entry name" value="CDK5 regulatory subunit-associated protein 1"/>
    <property type="match status" value="1"/>
</dbReference>
<dbReference type="FunFam" id="3.80.30.20:FF:000001">
    <property type="entry name" value="tRNA-2-methylthio-N(6)-dimethylallyladenosine synthase 2"/>
    <property type="match status" value="1"/>
</dbReference>
<dbReference type="Gene3D" id="3.40.50.12160">
    <property type="entry name" value="Methylthiotransferase, N-terminal domain"/>
    <property type="match status" value="1"/>
</dbReference>
<dbReference type="Gene3D" id="3.80.30.20">
    <property type="entry name" value="tm_1862 like domain"/>
    <property type="match status" value="1"/>
</dbReference>
<dbReference type="HAMAP" id="MF_01864">
    <property type="entry name" value="tRNA_metthiotr_MiaB"/>
    <property type="match status" value="1"/>
</dbReference>
<dbReference type="InterPro" id="IPR006638">
    <property type="entry name" value="Elp3/MiaA/NifB-like_rSAM"/>
</dbReference>
<dbReference type="InterPro" id="IPR005839">
    <property type="entry name" value="Methylthiotransferase"/>
</dbReference>
<dbReference type="InterPro" id="IPR020612">
    <property type="entry name" value="Methylthiotransferase_CS"/>
</dbReference>
<dbReference type="InterPro" id="IPR013848">
    <property type="entry name" value="Methylthiotransferase_N"/>
</dbReference>
<dbReference type="InterPro" id="IPR038135">
    <property type="entry name" value="Methylthiotransferase_N_sf"/>
</dbReference>
<dbReference type="InterPro" id="IPR006463">
    <property type="entry name" value="MiaB_methiolase"/>
</dbReference>
<dbReference type="InterPro" id="IPR007197">
    <property type="entry name" value="rSAM"/>
</dbReference>
<dbReference type="InterPro" id="IPR023404">
    <property type="entry name" value="rSAM_horseshoe"/>
</dbReference>
<dbReference type="InterPro" id="IPR002792">
    <property type="entry name" value="TRAM_dom"/>
</dbReference>
<dbReference type="NCBIfam" id="TIGR01574">
    <property type="entry name" value="miaB-methiolase"/>
    <property type="match status" value="1"/>
</dbReference>
<dbReference type="NCBIfam" id="TIGR00089">
    <property type="entry name" value="MiaB/RimO family radical SAM methylthiotransferase"/>
    <property type="match status" value="1"/>
</dbReference>
<dbReference type="PANTHER" id="PTHR43020">
    <property type="entry name" value="CDK5 REGULATORY SUBUNIT-ASSOCIATED PROTEIN 1"/>
    <property type="match status" value="1"/>
</dbReference>
<dbReference type="PANTHER" id="PTHR43020:SF2">
    <property type="entry name" value="MITOCHONDRIAL TRNA METHYLTHIOTRANSFERASE CDK5RAP1"/>
    <property type="match status" value="1"/>
</dbReference>
<dbReference type="Pfam" id="PF04055">
    <property type="entry name" value="Radical_SAM"/>
    <property type="match status" value="1"/>
</dbReference>
<dbReference type="Pfam" id="PF01938">
    <property type="entry name" value="TRAM"/>
    <property type="match status" value="1"/>
</dbReference>
<dbReference type="Pfam" id="PF00919">
    <property type="entry name" value="UPF0004"/>
    <property type="match status" value="1"/>
</dbReference>
<dbReference type="SFLD" id="SFLDF00273">
    <property type="entry name" value="(dimethylallyl)adenosine_tRNA"/>
    <property type="match status" value="1"/>
</dbReference>
<dbReference type="SFLD" id="SFLDG01082">
    <property type="entry name" value="B12-binding_domain_containing"/>
    <property type="match status" value="1"/>
</dbReference>
<dbReference type="SFLD" id="SFLDF00413">
    <property type="entry name" value="CDK5RAP1"/>
    <property type="match status" value="1"/>
</dbReference>
<dbReference type="SFLD" id="SFLDS00029">
    <property type="entry name" value="Radical_SAM"/>
    <property type="match status" value="1"/>
</dbReference>
<dbReference type="SMART" id="SM00729">
    <property type="entry name" value="Elp3"/>
    <property type="match status" value="1"/>
</dbReference>
<dbReference type="SUPFAM" id="SSF102114">
    <property type="entry name" value="Radical SAM enzymes"/>
    <property type="match status" value="1"/>
</dbReference>
<dbReference type="PROSITE" id="PS51449">
    <property type="entry name" value="MTTASE_N"/>
    <property type="match status" value="1"/>
</dbReference>
<dbReference type="PROSITE" id="PS01278">
    <property type="entry name" value="MTTASE_RADICAL"/>
    <property type="match status" value="1"/>
</dbReference>
<dbReference type="PROSITE" id="PS51918">
    <property type="entry name" value="RADICAL_SAM"/>
    <property type="match status" value="1"/>
</dbReference>
<dbReference type="PROSITE" id="PS50926">
    <property type="entry name" value="TRAM"/>
    <property type="match status" value="1"/>
</dbReference>
<protein>
    <recommendedName>
        <fullName evidence="1">tRNA-2-methylthio-N(6)-dimethylallyladenosine synthase</fullName>
        <ecNumber evidence="1">2.8.4.3</ecNumber>
    </recommendedName>
    <alternativeName>
        <fullName evidence="1">(Dimethylallyl)adenosine tRNA methylthiotransferase MiaB</fullName>
    </alternativeName>
    <alternativeName>
        <fullName evidence="1">tRNA-i(6)A37 methylthiotransferase</fullName>
    </alternativeName>
</protein>
<feature type="chain" id="PRO_0000374442" description="tRNA-2-methylthio-N(6)-dimethylallyladenosine synthase">
    <location>
        <begin position="1"/>
        <end position="465"/>
    </location>
</feature>
<feature type="domain" description="MTTase N-terminal" evidence="1">
    <location>
        <begin position="18"/>
        <end position="136"/>
    </location>
</feature>
<feature type="domain" description="Radical SAM core" evidence="2">
    <location>
        <begin position="160"/>
        <end position="392"/>
    </location>
</feature>
<feature type="domain" description="TRAM" evidence="1">
    <location>
        <begin position="395"/>
        <end position="458"/>
    </location>
</feature>
<feature type="binding site" evidence="1">
    <location>
        <position position="27"/>
    </location>
    <ligand>
        <name>[4Fe-4S] cluster</name>
        <dbReference type="ChEBI" id="CHEBI:49883"/>
        <label>1</label>
    </ligand>
</feature>
<feature type="binding site" evidence="1">
    <location>
        <position position="63"/>
    </location>
    <ligand>
        <name>[4Fe-4S] cluster</name>
        <dbReference type="ChEBI" id="CHEBI:49883"/>
        <label>1</label>
    </ligand>
</feature>
<feature type="binding site" evidence="1">
    <location>
        <position position="100"/>
    </location>
    <ligand>
        <name>[4Fe-4S] cluster</name>
        <dbReference type="ChEBI" id="CHEBI:49883"/>
        <label>1</label>
    </ligand>
</feature>
<feature type="binding site" evidence="1">
    <location>
        <position position="174"/>
    </location>
    <ligand>
        <name>[4Fe-4S] cluster</name>
        <dbReference type="ChEBI" id="CHEBI:49883"/>
        <label>2</label>
        <note>4Fe-4S-S-AdoMet</note>
    </ligand>
</feature>
<feature type="binding site" evidence="1">
    <location>
        <position position="178"/>
    </location>
    <ligand>
        <name>[4Fe-4S] cluster</name>
        <dbReference type="ChEBI" id="CHEBI:49883"/>
        <label>2</label>
        <note>4Fe-4S-S-AdoMet</note>
    </ligand>
</feature>
<feature type="binding site" evidence="1">
    <location>
        <position position="181"/>
    </location>
    <ligand>
        <name>[4Fe-4S] cluster</name>
        <dbReference type="ChEBI" id="CHEBI:49883"/>
        <label>2</label>
        <note>4Fe-4S-S-AdoMet</note>
    </ligand>
</feature>
<accession>B2RKG6</accession>
<organism>
    <name type="scientific">Porphyromonas gingivalis (strain ATCC 33277 / DSM 20709 / CIP 103683 / JCM 12257 / NCTC 11834 / 2561)</name>
    <dbReference type="NCBI Taxonomy" id="431947"/>
    <lineage>
        <taxon>Bacteria</taxon>
        <taxon>Pseudomonadati</taxon>
        <taxon>Bacteroidota</taxon>
        <taxon>Bacteroidia</taxon>
        <taxon>Bacteroidales</taxon>
        <taxon>Porphyromonadaceae</taxon>
        <taxon>Porphyromonas</taxon>
    </lineage>
</organism>
<comment type="function">
    <text evidence="1">Catalyzes the methylthiolation of N6-(dimethylallyl)adenosine (i(6)A), leading to the formation of 2-methylthio-N6-(dimethylallyl)adenosine (ms(2)i(6)A) at position 37 in tRNAs that read codons beginning with uridine.</text>
</comment>
<comment type="catalytic activity">
    <reaction evidence="1">
        <text>N(6)-dimethylallyladenosine(37) in tRNA + (sulfur carrier)-SH + AH2 + 2 S-adenosyl-L-methionine = 2-methylsulfanyl-N(6)-dimethylallyladenosine(37) in tRNA + (sulfur carrier)-H + 5'-deoxyadenosine + L-methionine + A + S-adenosyl-L-homocysteine + 2 H(+)</text>
        <dbReference type="Rhea" id="RHEA:37067"/>
        <dbReference type="Rhea" id="RHEA-COMP:10375"/>
        <dbReference type="Rhea" id="RHEA-COMP:10376"/>
        <dbReference type="Rhea" id="RHEA-COMP:14737"/>
        <dbReference type="Rhea" id="RHEA-COMP:14739"/>
        <dbReference type="ChEBI" id="CHEBI:13193"/>
        <dbReference type="ChEBI" id="CHEBI:15378"/>
        <dbReference type="ChEBI" id="CHEBI:17319"/>
        <dbReference type="ChEBI" id="CHEBI:17499"/>
        <dbReference type="ChEBI" id="CHEBI:29917"/>
        <dbReference type="ChEBI" id="CHEBI:57844"/>
        <dbReference type="ChEBI" id="CHEBI:57856"/>
        <dbReference type="ChEBI" id="CHEBI:59789"/>
        <dbReference type="ChEBI" id="CHEBI:64428"/>
        <dbReference type="ChEBI" id="CHEBI:74415"/>
        <dbReference type="ChEBI" id="CHEBI:74417"/>
        <dbReference type="EC" id="2.8.4.3"/>
    </reaction>
</comment>
<comment type="cofactor">
    <cofactor evidence="1">
        <name>[4Fe-4S] cluster</name>
        <dbReference type="ChEBI" id="CHEBI:49883"/>
    </cofactor>
    <text evidence="1">Binds 2 [4Fe-4S] clusters. One cluster is coordinated with 3 cysteines and an exchangeable S-adenosyl-L-methionine.</text>
</comment>
<comment type="subunit">
    <text evidence="1">Monomer.</text>
</comment>
<comment type="subcellular location">
    <subcellularLocation>
        <location evidence="1">Cytoplasm</location>
    </subcellularLocation>
</comment>
<comment type="similarity">
    <text evidence="1">Belongs to the methylthiotransferase family. MiaB subfamily.</text>
</comment>
<gene>
    <name evidence="1" type="primary">miaB</name>
    <name type="ordered locus">PGN_1342</name>
</gene>
<evidence type="ECO:0000255" key="1">
    <source>
        <dbReference type="HAMAP-Rule" id="MF_01864"/>
    </source>
</evidence>
<evidence type="ECO:0000255" key="2">
    <source>
        <dbReference type="PROSITE-ProRule" id="PRU01266"/>
    </source>
</evidence>
<sequence>MIEQIGADSKSAENKQERKLYIETYGCQMNVADSEVVASVMQMDGYSLTDNVDEADTILVNTCSVRDNAEQKVLNRLAYYHSLRKKRRASSRLVIGVLGCMAERVKEELIREHHVDVVAGPDSYLDLPNLVGAAEQGEKAINVELSMQETYKDVMPLKMGGVHINGFVSIMRGCNNFCSYCIVPYTRGRERSREIESILNEVRDLKAKNFREVTLLGQNVNSYRYEQNGRIIRFPDLLAAVAEAVPDMRIRFTSPHPKDMDDEAIAVMARYRNICNHIHLPAQSGSDKMLRVMKRGYTRRWYLDRVAAIRRAIPDCAISSDLFCGFHSETEEDFEATLSLMEEVGYDSAFMFKYSERPGTYAARHLVDDVLEEVKLARLDRMIALQNRLSEESNKRDISKTFEVLIEGFSKRSREQLFGRTQQNKVVIFDKNGHRVGQYIYVRIKDASSATLFGEVVEAPTSEKG</sequence>